<reference key="1">
    <citation type="journal article" date="2005" name="Genome Res.">
        <title>The Chlamydophila abortus genome sequence reveals an array of variable proteins that contribute to interspecies variation.</title>
        <authorList>
            <person name="Thomson N.R."/>
            <person name="Yeats C."/>
            <person name="Bell K."/>
            <person name="Holden M.T.G."/>
            <person name="Bentley S.D."/>
            <person name="Livingstone M."/>
            <person name="Cerdeno-Tarraga A.-M."/>
            <person name="Harris B."/>
            <person name="Doggett J."/>
            <person name="Ormond D."/>
            <person name="Mungall K."/>
            <person name="Clarke K."/>
            <person name="Feltwell T."/>
            <person name="Hance Z."/>
            <person name="Sanders M."/>
            <person name="Quail M.A."/>
            <person name="Price C."/>
            <person name="Barrell B.G."/>
            <person name="Parkhill J."/>
            <person name="Longbottom D."/>
        </authorList>
    </citation>
    <scope>NUCLEOTIDE SEQUENCE [LARGE SCALE GENOMIC DNA]</scope>
    <source>
        <strain>DSM 27085 / S26/3</strain>
    </source>
</reference>
<proteinExistence type="inferred from homology"/>
<protein>
    <recommendedName>
        <fullName evidence="1">Large ribosomal subunit protein bL31B</fullName>
    </recommendedName>
    <alternativeName>
        <fullName evidence="3">50S ribosomal protein L31 type B</fullName>
    </alternativeName>
</protein>
<feature type="chain" id="PRO_0000173214" description="Large ribosomal subunit protein bL31B">
    <location>
        <begin position="1"/>
        <end position="108"/>
    </location>
</feature>
<feature type="region of interest" description="Disordered" evidence="2">
    <location>
        <begin position="88"/>
        <end position="108"/>
    </location>
</feature>
<feature type="compositionally biased region" description="Basic residues" evidence="2">
    <location>
        <begin position="97"/>
        <end position="108"/>
    </location>
</feature>
<sequence>MKKNTHPNYQQVLFVDSSTGYKFVCGSTYQSDKTEVFEGQEYPVCYVSVSSASHPFFTGSKRLVDAEGRVDKFLKRYSNVKPAQPAQAAVEEAPAVKSKKKAPIKKKK</sequence>
<dbReference type="EMBL" id="CR848038">
    <property type="protein sequence ID" value="CAH64078.1"/>
    <property type="molecule type" value="Genomic_DNA"/>
</dbReference>
<dbReference type="RefSeq" id="WP_006344248.1">
    <property type="nucleotide sequence ID" value="NC_004552.2"/>
</dbReference>
<dbReference type="SMR" id="Q5L5L3"/>
<dbReference type="KEGG" id="cab:CAB631"/>
<dbReference type="eggNOG" id="COG0254">
    <property type="taxonomic scope" value="Bacteria"/>
</dbReference>
<dbReference type="HOGENOM" id="CLU_114306_2_0_0"/>
<dbReference type="OrthoDB" id="9803251at2"/>
<dbReference type="Proteomes" id="UP000001012">
    <property type="component" value="Chromosome"/>
</dbReference>
<dbReference type="GO" id="GO:1990904">
    <property type="term" value="C:ribonucleoprotein complex"/>
    <property type="evidence" value="ECO:0007669"/>
    <property type="project" value="UniProtKB-KW"/>
</dbReference>
<dbReference type="GO" id="GO:0005840">
    <property type="term" value="C:ribosome"/>
    <property type="evidence" value="ECO:0007669"/>
    <property type="project" value="UniProtKB-KW"/>
</dbReference>
<dbReference type="GO" id="GO:0003735">
    <property type="term" value="F:structural constituent of ribosome"/>
    <property type="evidence" value="ECO:0007669"/>
    <property type="project" value="InterPro"/>
</dbReference>
<dbReference type="GO" id="GO:0006412">
    <property type="term" value="P:translation"/>
    <property type="evidence" value="ECO:0007669"/>
    <property type="project" value="UniProtKB-UniRule"/>
</dbReference>
<dbReference type="Gene3D" id="4.10.830.30">
    <property type="entry name" value="Ribosomal protein L31"/>
    <property type="match status" value="1"/>
</dbReference>
<dbReference type="HAMAP" id="MF_00502">
    <property type="entry name" value="Ribosomal_bL31_2"/>
    <property type="match status" value="1"/>
</dbReference>
<dbReference type="InterPro" id="IPR034704">
    <property type="entry name" value="Ribosomal_bL28/bL31-like_sf"/>
</dbReference>
<dbReference type="InterPro" id="IPR002150">
    <property type="entry name" value="Ribosomal_bL31"/>
</dbReference>
<dbReference type="InterPro" id="IPR027493">
    <property type="entry name" value="Ribosomal_bL31_B"/>
</dbReference>
<dbReference type="InterPro" id="IPR042105">
    <property type="entry name" value="Ribosomal_bL31_sf"/>
</dbReference>
<dbReference type="NCBIfam" id="TIGR00105">
    <property type="entry name" value="L31"/>
    <property type="match status" value="1"/>
</dbReference>
<dbReference type="NCBIfam" id="NF002462">
    <property type="entry name" value="PRK01678.1"/>
    <property type="match status" value="1"/>
</dbReference>
<dbReference type="PANTHER" id="PTHR33280">
    <property type="entry name" value="50S RIBOSOMAL PROTEIN L31, CHLOROPLASTIC"/>
    <property type="match status" value="1"/>
</dbReference>
<dbReference type="PANTHER" id="PTHR33280:SF1">
    <property type="entry name" value="LARGE RIBOSOMAL SUBUNIT PROTEIN BL31C"/>
    <property type="match status" value="1"/>
</dbReference>
<dbReference type="Pfam" id="PF01197">
    <property type="entry name" value="Ribosomal_L31"/>
    <property type="match status" value="1"/>
</dbReference>
<dbReference type="PRINTS" id="PR01249">
    <property type="entry name" value="RIBOSOMALL31"/>
</dbReference>
<dbReference type="SUPFAM" id="SSF143800">
    <property type="entry name" value="L28p-like"/>
    <property type="match status" value="1"/>
</dbReference>
<dbReference type="PROSITE" id="PS01143">
    <property type="entry name" value="RIBOSOMAL_L31"/>
    <property type="match status" value="1"/>
</dbReference>
<keyword id="KW-0687">Ribonucleoprotein</keyword>
<keyword id="KW-0689">Ribosomal protein</keyword>
<comment type="subunit">
    <text evidence="1">Part of the 50S ribosomal subunit.</text>
</comment>
<comment type="similarity">
    <text evidence="1">Belongs to the bacterial ribosomal protein bL31 family. Type B subfamily.</text>
</comment>
<gene>
    <name evidence="1" type="primary">rpmE2</name>
    <name type="synonym">rpmE</name>
    <name type="ordered locus">CAB631</name>
</gene>
<organism>
    <name type="scientific">Chlamydia abortus (strain DSM 27085 / S26/3)</name>
    <name type="common">Chlamydophila abortus</name>
    <dbReference type="NCBI Taxonomy" id="218497"/>
    <lineage>
        <taxon>Bacteria</taxon>
        <taxon>Pseudomonadati</taxon>
        <taxon>Chlamydiota</taxon>
        <taxon>Chlamydiia</taxon>
        <taxon>Chlamydiales</taxon>
        <taxon>Chlamydiaceae</taxon>
        <taxon>Chlamydia/Chlamydophila group</taxon>
        <taxon>Chlamydia</taxon>
    </lineage>
</organism>
<name>RL31B_CHLAB</name>
<evidence type="ECO:0000255" key="1">
    <source>
        <dbReference type="HAMAP-Rule" id="MF_00502"/>
    </source>
</evidence>
<evidence type="ECO:0000256" key="2">
    <source>
        <dbReference type="SAM" id="MobiDB-lite"/>
    </source>
</evidence>
<evidence type="ECO:0000305" key="3"/>
<accession>Q5L5L3</accession>